<keyword id="KW-0012">Acyltransferase</keyword>
<keyword id="KW-0963">Cytoplasm</keyword>
<keyword id="KW-0808">Transferase</keyword>
<reference key="1">
    <citation type="journal article" date="1996" name="Protein Sci.">
        <title>Sequence and organization of genes encoding enzymes involved in pyruvate metabolism in Mycoplasma capricolum.</title>
        <authorList>
            <person name="Zhu P.P."/>
            <person name="Peterkofsky A."/>
        </authorList>
    </citation>
    <scope>NUCLEOTIDE SEQUENCE [GENOMIC DNA]</scope>
</reference>
<reference key="2">
    <citation type="submission" date="2005-09" db="EMBL/GenBank/DDBJ databases">
        <authorList>
            <person name="Glass J.I."/>
            <person name="Lartigue C."/>
            <person name="Pfannkoch C."/>
            <person name="Baden-Tillson H."/>
            <person name="Smith H.O."/>
            <person name="Venter J.C."/>
            <person name="Roske K."/>
            <person name="Wise K.S."/>
            <person name="Calcutt M.J."/>
            <person name="Nelson W.C."/>
            <person name="Nierman W.C."/>
        </authorList>
    </citation>
    <scope>NUCLEOTIDE SEQUENCE [LARGE SCALE GENOMIC DNA]</scope>
    <source>
        <strain>California kid / ATCC 27343 / NCTC 10154</strain>
    </source>
</reference>
<proteinExistence type="inferred from homology"/>
<comment type="catalytic activity">
    <reaction>
        <text>acetyl-CoA + phosphate = acetyl phosphate + CoA</text>
        <dbReference type="Rhea" id="RHEA:19521"/>
        <dbReference type="ChEBI" id="CHEBI:22191"/>
        <dbReference type="ChEBI" id="CHEBI:43474"/>
        <dbReference type="ChEBI" id="CHEBI:57287"/>
        <dbReference type="ChEBI" id="CHEBI:57288"/>
        <dbReference type="EC" id="2.3.1.8"/>
    </reaction>
</comment>
<comment type="pathway">
    <text>Metabolic intermediate biosynthesis; acetyl-CoA biosynthesis; acetyl-CoA from acetate: step 2/2.</text>
</comment>
<comment type="subcellular location">
    <subcellularLocation>
        <location evidence="1">Cytoplasm</location>
    </subcellularLocation>
</comment>
<comment type="similarity">
    <text evidence="1">Belongs to the phosphate acetyltransferase and butyryltransferase family.</text>
</comment>
<evidence type="ECO:0000305" key="1"/>
<name>PTAS_MYCCT</name>
<sequence>MYTLEEIKNQLGLKSEKKSIVFPEAESEIIQSVAKTLVDEKLGLPILLFKSSKEVPSEIKNNSSIKTICLDEFDTKEFEEEFVKLRKGKATIEVAHQVMQLPNYIGAMLVKLNQADCMLSGLNNTTADTIRPALQIIGTKPGYNIASSIFVMSKGNENYIFTDCALNIKPTSEQLVEITQMAVDFAKALNVKNVEAALLSYSTNGSGKGEDVDRVHQAVEILKSKEKDYVCEGEIQFDAAFDKKTRDKKFKNCSLLKQTPDIFVFPDINAGNIGYKIAQRMGGFEAIGPFVLGLNQPVNDLSRGATFVDVLNTAIMTLYLSY</sequence>
<protein>
    <recommendedName>
        <fullName>Phosphate acetyltransferase</fullName>
        <ecNumber>2.3.1.8</ecNumber>
    </recommendedName>
    <alternativeName>
        <fullName>Phosphotransacetylase</fullName>
    </alternativeName>
</protein>
<organism>
    <name type="scientific">Mycoplasma capricolum subsp. capricolum (strain California kid / ATCC 27343 / NCTC 10154)</name>
    <dbReference type="NCBI Taxonomy" id="340047"/>
    <lineage>
        <taxon>Bacteria</taxon>
        <taxon>Bacillati</taxon>
        <taxon>Mycoplasmatota</taxon>
        <taxon>Mollicutes</taxon>
        <taxon>Mycoplasmataceae</taxon>
        <taxon>Mycoplasma</taxon>
    </lineage>
</organism>
<gene>
    <name type="primary">pta</name>
    <name type="ordered locus">MCAP_0229</name>
</gene>
<feature type="chain" id="PRO_0000179132" description="Phosphate acetyltransferase">
    <location>
        <begin position="1"/>
        <end position="322"/>
    </location>
</feature>
<dbReference type="EC" id="2.3.1.8"/>
<dbReference type="EMBL" id="U62057">
    <property type="protein sequence ID" value="AAC44346.1"/>
    <property type="molecule type" value="Genomic_DNA"/>
</dbReference>
<dbReference type="EMBL" id="CP000123">
    <property type="protein sequence ID" value="ABC01301.1"/>
    <property type="molecule type" value="Genomic_DNA"/>
</dbReference>
<dbReference type="RefSeq" id="WP_011387117.1">
    <property type="nucleotide sequence ID" value="NC_007633.1"/>
</dbReference>
<dbReference type="SMR" id="Q49112"/>
<dbReference type="GeneID" id="23778818"/>
<dbReference type="KEGG" id="mcp:MCAP_0229"/>
<dbReference type="HOGENOM" id="CLU_019723_0_1_14"/>
<dbReference type="PhylomeDB" id="Q49112"/>
<dbReference type="UniPathway" id="UPA00340">
    <property type="reaction ID" value="UER00459"/>
</dbReference>
<dbReference type="Proteomes" id="UP000001928">
    <property type="component" value="Chromosome"/>
</dbReference>
<dbReference type="GO" id="GO:0005737">
    <property type="term" value="C:cytoplasm"/>
    <property type="evidence" value="ECO:0007669"/>
    <property type="project" value="UniProtKB-SubCell"/>
</dbReference>
<dbReference type="GO" id="GO:0008959">
    <property type="term" value="F:phosphate acetyltransferase activity"/>
    <property type="evidence" value="ECO:0007669"/>
    <property type="project" value="UniProtKB-EC"/>
</dbReference>
<dbReference type="GO" id="GO:0006085">
    <property type="term" value="P:acetyl-CoA biosynthetic process"/>
    <property type="evidence" value="ECO:0007669"/>
    <property type="project" value="UniProtKB-UniPathway"/>
</dbReference>
<dbReference type="Gene3D" id="3.40.50.10950">
    <property type="match status" value="1"/>
</dbReference>
<dbReference type="Gene3D" id="3.40.50.10750">
    <property type="entry name" value="Isocitrate/Isopropylmalate dehydrogenase-like"/>
    <property type="match status" value="1"/>
</dbReference>
<dbReference type="InterPro" id="IPR012147">
    <property type="entry name" value="P_Ac_Bu_trans"/>
</dbReference>
<dbReference type="InterPro" id="IPR004614">
    <property type="entry name" value="P_AcTrfase"/>
</dbReference>
<dbReference type="InterPro" id="IPR042113">
    <property type="entry name" value="P_AcTrfase_dom1"/>
</dbReference>
<dbReference type="InterPro" id="IPR042112">
    <property type="entry name" value="P_AcTrfase_dom2"/>
</dbReference>
<dbReference type="InterPro" id="IPR050500">
    <property type="entry name" value="Phos_Acetyltrans/Butyryltrans"/>
</dbReference>
<dbReference type="InterPro" id="IPR002505">
    <property type="entry name" value="PTA_PTB"/>
</dbReference>
<dbReference type="NCBIfam" id="NF007233">
    <property type="entry name" value="PRK09653.1"/>
    <property type="match status" value="1"/>
</dbReference>
<dbReference type="NCBIfam" id="TIGR00651">
    <property type="entry name" value="pta"/>
    <property type="match status" value="1"/>
</dbReference>
<dbReference type="PANTHER" id="PTHR43356">
    <property type="entry name" value="PHOSPHATE ACETYLTRANSFERASE"/>
    <property type="match status" value="1"/>
</dbReference>
<dbReference type="PANTHER" id="PTHR43356:SF3">
    <property type="entry name" value="PHOSPHATE ACETYLTRANSFERASE"/>
    <property type="match status" value="1"/>
</dbReference>
<dbReference type="Pfam" id="PF01515">
    <property type="entry name" value="PTA_PTB"/>
    <property type="match status" value="1"/>
</dbReference>
<dbReference type="PIRSF" id="PIRSF000428">
    <property type="entry name" value="P_Ac_trans"/>
    <property type="match status" value="1"/>
</dbReference>
<dbReference type="SUPFAM" id="SSF53659">
    <property type="entry name" value="Isocitrate/Isopropylmalate dehydrogenase-like"/>
    <property type="match status" value="1"/>
</dbReference>
<accession>Q49112</accession>
<accession>Q2SSP7</accession>